<organism>
    <name type="scientific">Mus musculus</name>
    <name type="common">Mouse</name>
    <dbReference type="NCBI Taxonomy" id="10090"/>
    <lineage>
        <taxon>Eukaryota</taxon>
        <taxon>Metazoa</taxon>
        <taxon>Chordata</taxon>
        <taxon>Craniata</taxon>
        <taxon>Vertebrata</taxon>
        <taxon>Euteleostomi</taxon>
        <taxon>Mammalia</taxon>
        <taxon>Eutheria</taxon>
        <taxon>Euarchontoglires</taxon>
        <taxon>Glires</taxon>
        <taxon>Rodentia</taxon>
        <taxon>Myomorpha</taxon>
        <taxon>Muroidea</taxon>
        <taxon>Muridae</taxon>
        <taxon>Murinae</taxon>
        <taxon>Mus</taxon>
        <taxon>Mus</taxon>
    </lineage>
</organism>
<keyword id="KW-0025">Alternative splicing</keyword>
<keyword id="KW-0968">Cytoplasmic vesicle</keyword>
<keyword id="KW-1015">Disulfide bond</keyword>
<keyword id="KW-0256">Endoplasmic reticulum</keyword>
<keyword id="KW-0967">Endosome</keyword>
<keyword id="KW-0269">Exonuclease</keyword>
<keyword id="KW-0325">Glycoprotein</keyword>
<keyword id="KW-0333">Golgi apparatus</keyword>
<keyword id="KW-0378">Hydrolase</keyword>
<keyword id="KW-0391">Immunity</keyword>
<keyword id="KW-0395">Inflammatory response</keyword>
<keyword id="KW-0399">Innate immunity</keyword>
<keyword id="KW-0443">Lipid metabolism</keyword>
<keyword id="KW-0458">Lysosome</keyword>
<keyword id="KW-0472">Membrane</keyword>
<keyword id="KW-0540">Nuclease</keyword>
<keyword id="KW-0539">Nucleus</keyword>
<keyword id="KW-1208">Phospholipid metabolism</keyword>
<keyword id="KW-1185">Reference proteome</keyword>
<keyword id="KW-0677">Repeat</keyword>
<keyword id="KW-0735">Signal-anchor</keyword>
<keyword id="KW-0812">Transmembrane</keyword>
<keyword id="KW-1133">Transmembrane helix</keyword>
<evidence type="ECO:0000250" key="1">
    <source>
        <dbReference type="UniProtKB" id="Q8IV08"/>
    </source>
</evidence>
<evidence type="ECO:0000250" key="2">
    <source>
        <dbReference type="UniProtKB" id="Q96BZ4"/>
    </source>
</evidence>
<evidence type="ECO:0000255" key="3">
    <source>
        <dbReference type="PROSITE-ProRule" id="PRU00153"/>
    </source>
</evidence>
<evidence type="ECO:0000255" key="4">
    <source>
        <dbReference type="PROSITE-ProRule" id="PRU00498"/>
    </source>
</evidence>
<evidence type="ECO:0000269" key="5">
    <source>
    </source>
</evidence>
<evidence type="ECO:0000269" key="6">
    <source>
    </source>
</evidence>
<evidence type="ECO:0000269" key="7">
    <source>
    </source>
</evidence>
<evidence type="ECO:0000269" key="8">
    <source>
    </source>
</evidence>
<evidence type="ECO:0000269" key="9">
    <source>
    </source>
</evidence>
<evidence type="ECO:0000269" key="10">
    <source>
    </source>
</evidence>
<evidence type="ECO:0000303" key="11">
    <source>
    </source>
</evidence>
<evidence type="ECO:0000303" key="12">
    <source>
    </source>
</evidence>
<evidence type="ECO:0000305" key="13"/>
<evidence type="ECO:0000305" key="14">
    <source>
    </source>
</evidence>
<evidence type="ECO:0000305" key="15">
    <source>
    </source>
</evidence>
<evidence type="ECO:0000305" key="16">
    <source>
    </source>
</evidence>
<evidence type="ECO:0000305" key="17">
    <source>
    </source>
</evidence>
<evidence type="ECO:0000305" key="18">
    <source>
    </source>
</evidence>
<evidence type="ECO:0000305" key="19">
    <source>
    </source>
</evidence>
<evidence type="ECO:0000312" key="20">
    <source>
        <dbReference type="MGI" id="MGI:2144765"/>
    </source>
</evidence>
<comment type="function">
    <text evidence="1 7 8 9 10">5'-&gt;3' exonuclease that hydrolyzes the phosphodiester bond of single-stranded DNA (ssDNA) and RNA molecules to form nucleoside 3'-monophosphates and 5'-end 5'-hydroxy deoxyribonucleotide/ribonucleotide fragments. Partially redundant with PLD4, can cleave all four nucleotides displaying higher efficiency for ssDNA and RNA fragments initiated with uridine and guanosine residues and lower efficiency for cytidine-initiated substrates. As a result, it does not always degrade polynucleotides to the single nucleotide level, it can stall at specific sites sparing certain fragments from exonucleolytic degradation (PubMed:30111894, PubMed:34620855, PubMed:38537643). Processes self and pathogenic ssDNA and RNA molecules that reach the endolysosomal compartment via phagocytosis or autophagy and may serve as 'danger' signals for recognition by innate immune receptors such as toll-like receptors (TLRs). Degrades mitochondrial CpG-rich ssDNA fragments to prevent TLR9 activation and autoinflammatory response, but it can cleave viral RNA to generate ligands for TLR7 activation and initiate antiviral immune responses. In plasmacytoid dendritic cells, it cooperates with endonuclease RNASET2 to release 2',3'-cyclic guanosine monophosphate (2',3'-cGMP), a potent stimulatory ligand for TLR7 (PubMed:34620855). Produces 2',3'-cGMPs and cytidine-rich RNA fragments that occupy TLR7 ligand-binding pockets and trigger a signaling-competent state. Can exert polynucleotide phosphatase activity toward 5'-phosphorylated ssDNA substrates although at a slow rate (PubMed:38537643). Transphosphatidylase that catalyzes the exchange with R to S stereo-inversion of the glycerol moiety between (S,R)-lysophosphatidylglycerol (LPG) and monoacylglycerol (MAG) substrates to yield (S,S)-bis(monoacylglycero)phosphate (BMP) (PubMed:39423811). Can synthesize a variety of (S,S)-BMPs representing the main phospholipid constituent of lysosomal intralumenal vesicle (ILV) membranes that bind acid hydrolases for lipid degradation (PubMed:39423811). Regulates the homeostasis and interorganellar communication of the endolysosomal system with an overall impact on cellular removal of dysfunctional organelles via autophagy as well as proper protein and lipid turnover. May play a role in myotube formation in response to ER stress (By similarity).</text>
</comment>
<comment type="catalytic activity">
    <reaction evidence="7 8 9">
        <text>Exonucleolytic cleavage in the 5'- to 3'-direction to yield nucleoside 3'-phosphates.</text>
        <dbReference type="EC" id="3.1.16.1"/>
    </reaction>
</comment>
<comment type="catalytic activity">
    <reaction evidence="8">
        <text>a 5'-end 5'-dephospho-ribonucleotidyl-ribonucleotide-RNA + H2O = a ribonucleoside 3'-phosphate + a 5'-end dephospho-ribonucleoside-RNA + H(+)</text>
        <dbReference type="Rhea" id="RHEA:81375"/>
        <dbReference type="Rhea" id="RHEA-COMP:13936"/>
        <dbReference type="Rhea" id="RHEA-COMP:19670"/>
        <dbReference type="ChEBI" id="CHEBI:13197"/>
        <dbReference type="ChEBI" id="CHEBI:15377"/>
        <dbReference type="ChEBI" id="CHEBI:15378"/>
        <dbReference type="ChEBI" id="CHEBI:138284"/>
        <dbReference type="ChEBI" id="CHEBI:231871"/>
    </reaction>
    <physiologicalReaction direction="left-to-right" evidence="17">
        <dbReference type="Rhea" id="RHEA:81376"/>
    </physiologicalReaction>
</comment>
<comment type="catalytic activity">
    <reaction evidence="1">
        <text>a ribonucleoside 3'-phosphate-2'-3'-cyclophospho-GMP + H2O = a ribonucleoside 3'-phosphate + 2',3'-cyclophospho-GMP + H(+)</text>
        <dbReference type="Rhea" id="RHEA:81319"/>
        <dbReference type="ChEBI" id="CHEBI:13197"/>
        <dbReference type="ChEBI" id="CHEBI:15377"/>
        <dbReference type="ChEBI" id="CHEBI:15378"/>
        <dbReference type="ChEBI" id="CHEBI:60837"/>
        <dbReference type="ChEBI" id="CHEBI:231870"/>
    </reaction>
    <physiologicalReaction direction="left-to-right" evidence="1">
        <dbReference type="Rhea" id="RHEA:81320"/>
    </physiologicalReaction>
</comment>
<comment type="catalytic activity">
    <reaction evidence="7 9">
        <text>a 5'-end 5'-dephospho-2'-deoxyribonucleotidyl-2'-deoxyribonucleotide in single-stranded DNA + H2O = a 5'-end dephospho-2'-deoxyribonucleoside in single-stranded DNA + a 2'-deoxyribonucleoside 3'-phosphate + H(+)</text>
        <dbReference type="Rhea" id="RHEA:81379"/>
        <dbReference type="Rhea" id="RHEA-COMP:19701"/>
        <dbReference type="Rhea" id="RHEA-COMP:19702"/>
        <dbReference type="ChEBI" id="CHEBI:15377"/>
        <dbReference type="ChEBI" id="CHEBI:15378"/>
        <dbReference type="ChEBI" id="CHEBI:131705"/>
        <dbReference type="ChEBI" id="CHEBI:136416"/>
        <dbReference type="ChEBI" id="CHEBI:231873"/>
    </reaction>
    <physiologicalReaction direction="left-to-right" evidence="16 18">
        <dbReference type="Rhea" id="RHEA:81380"/>
    </physiologicalReaction>
</comment>
<comment type="catalytic activity">
    <reaction evidence="9">
        <text>a 5'-end 5'-phospho-2'-deoxyribonucleotide in single-stranded DNA + H2O = a 5'-end 5'-dephospho-2'-deoxyribonucleotide in single-stranded DNA + phosphate</text>
        <dbReference type="Rhea" id="RHEA:82335"/>
        <dbReference type="Rhea" id="RHEA-COMP:19868"/>
        <dbReference type="Rhea" id="RHEA-COMP:19869"/>
        <dbReference type="ChEBI" id="CHEBI:15377"/>
        <dbReference type="ChEBI" id="CHEBI:43474"/>
        <dbReference type="ChEBI" id="CHEBI:136412"/>
        <dbReference type="ChEBI" id="CHEBI:136416"/>
    </reaction>
    <physiologicalReaction direction="left-to-right" evidence="18">
        <dbReference type="Rhea" id="RHEA:82336"/>
    </physiologicalReaction>
</comment>
<comment type="catalytic activity">
    <reaction evidence="1">
        <text>a 3-lyso-sn-glycero-1-phospho-(3'-acyl-1'-sn-glycerol) + a 1-acyl-sn-glycerol = a 3-acyl-sn-glycero-1-phospho-(3'-acyl-1'-sn-glycerol) + glycerol</text>
        <dbReference type="Rhea" id="RHEA:82563"/>
        <dbReference type="ChEBI" id="CHEBI:17754"/>
        <dbReference type="ChEBI" id="CHEBI:64683"/>
        <dbReference type="ChEBI" id="CHEBI:77717"/>
        <dbReference type="ChEBI" id="CHEBI:232393"/>
    </reaction>
    <physiologicalReaction direction="left-to-right" evidence="1">
        <dbReference type="Rhea" id="RHEA:82564"/>
    </physiologicalReaction>
</comment>
<comment type="catalytic activity">
    <reaction evidence="1">
        <text>3-lyso-sn-glycero-1-phospho-(3'-(9Z-octadecenoyl)-1'-sn-glycerol) + 1-(9Z-octadecenoyl)-sn-glycerol = 3-(9Z-octadecenoyl)-sn-glycero-1-phospho-(3'-(9Z-octadecenoyl)-1'-sn-glycerol) + glycerol</text>
        <dbReference type="Rhea" id="RHEA:82567"/>
        <dbReference type="ChEBI" id="CHEBI:17754"/>
        <dbReference type="ChEBI" id="CHEBI:75757"/>
        <dbReference type="ChEBI" id="CHEBI:139150"/>
        <dbReference type="ChEBI" id="CHEBI:232394"/>
    </reaction>
    <physiologicalReaction direction="left-to-right" evidence="1">
        <dbReference type="Rhea" id="RHEA:82568"/>
    </physiologicalReaction>
</comment>
<comment type="activity regulation">
    <text evidence="9">The exonuclease activity toward ssDNA substrate is Ca(2+) and Mg(2+)-independent, but it is inhibited by Fe(2+), Cu(2+) and to a lesser extent Zn(2+) ions.</text>
</comment>
<comment type="biophysicochemical properties">
    <phDependence>
        <text evidence="7 8">Optimum pH is about 5.</text>
    </phDependence>
</comment>
<comment type="subcellular location">
    <subcellularLocation>
        <location evidence="5">Endoplasmic reticulum membrane</location>
        <topology evidence="14">Single-pass type II membrane protein</topology>
    </subcellularLocation>
    <subcellularLocation>
        <location evidence="5">Golgi apparatus</location>
        <location evidence="5">trans-Golgi network membrane</location>
        <topology evidence="14">Single-pass type II membrane protein</topology>
    </subcellularLocation>
    <subcellularLocation>
        <location evidence="6">Nucleus</location>
    </subcellularLocation>
    <subcellularLocation>
        <location evidence="15">Early endosome</location>
    </subcellularLocation>
    <subcellularLocation>
        <location evidence="6">Cytoplasmic vesicle</location>
        <location evidence="6">Phagosome</location>
    </subcellularLocation>
    <subcellularLocation>
        <location evidence="1">Lysosome</location>
    </subcellularLocation>
    <text evidence="6">Activation of microglia induces translocation of PLD4 from the nucleus to the phagosomes.</text>
</comment>
<comment type="alternative products">
    <event type="alternative splicing"/>
    <isoform>
        <id>Q8BG07-1</id>
        <name>1</name>
        <sequence type="displayed"/>
    </isoform>
    <isoform>
        <id>Q8BG07-2</id>
        <name>2</name>
        <sequence type="described" ref="VSP_023630"/>
    </isoform>
</comment>
<comment type="tissue specificity">
    <text evidence="5 7">Enriched in the white matter of early postnatal brains, as well as in splenic marginal zone cells (PubMed:21085684). Highly expressed in dendritic cells (DCs) and other myeloid cells, with lower expression in B cell (PubMed:30111894).</text>
</comment>
<comment type="developmental stage">
    <text evidence="5">First detected in cerebellum at postnatal day 0 (P0), increased with age and peaked at P7, and then rapidly decreased to adult levels by P21.</text>
</comment>
<comment type="induction">
    <text evidence="6">Up-regulated by lipopolysaccharide (LPS) stimulation in microglia (PubMed:22102906). Increased expression in activated microglia and in the demyelinating lesions of adult brain (PubMed:22102906).</text>
</comment>
<comment type="PTM">
    <text evidence="5 6">Highly N-glycosylated.</text>
</comment>
<comment type="disruption phenotype">
    <text evidence="7 8">Deficient mice exhibit a phenotype of chronic activation of the immune system, with splenomegaly marked by elevated levels of IFNG (PubMed:30111894). PDL3 and PLD4 double-deficient mice develop spontaneous lethal hemophagocytic lymphohistiocytosis with substantial liver pathology and die at 2 to 3 weeks of age. This phenotype could be prevented by expression of a single allele of either PDL3 or PLD4.</text>
</comment>
<comment type="similarity">
    <text evidence="13">Belongs to the phospholipase D family.</text>
</comment>
<comment type="caution">
    <text evidence="7">Exhibits no phospholipase activity, despite two HKD motifs.</text>
</comment>
<comment type="sequence caution" evidence="13">
    <conflict type="frameshift">
        <sequence resource="EMBL-CDS" id="BAC32379"/>
    </conflict>
</comment>
<dbReference type="EC" id="3.1.16.1" evidence="7"/>
<dbReference type="EC" id="3.1.4.-" evidence="10"/>
<dbReference type="EMBL" id="AK045459">
    <property type="protein sequence ID" value="BAC32379.1"/>
    <property type="status" value="ALT_FRAME"/>
    <property type="molecule type" value="mRNA"/>
</dbReference>
<dbReference type="EMBL" id="AK079549">
    <property type="protein sequence ID" value="BAC37681.1"/>
    <property type="molecule type" value="mRNA"/>
</dbReference>
<dbReference type="EMBL" id="AK079878">
    <property type="protein sequence ID" value="BAC37771.1"/>
    <property type="molecule type" value="mRNA"/>
</dbReference>
<dbReference type="EMBL" id="AK151551">
    <property type="protein sequence ID" value="BAE30496.1"/>
    <property type="molecule type" value="mRNA"/>
</dbReference>
<dbReference type="EMBL" id="AK170362">
    <property type="protein sequence ID" value="BAE41745.1"/>
    <property type="molecule type" value="mRNA"/>
</dbReference>
<dbReference type="EMBL" id="BC058565">
    <property type="protein sequence ID" value="AAH58565.1"/>
    <property type="molecule type" value="mRNA"/>
</dbReference>
<dbReference type="CCDS" id="CCDS26195.1">
    <molecule id="Q8BG07-1"/>
</dbReference>
<dbReference type="RefSeq" id="NP_849242.1">
    <molecule id="Q8BG07-1"/>
    <property type="nucleotide sequence ID" value="NM_178911.4"/>
</dbReference>
<dbReference type="SMR" id="Q8BG07"/>
<dbReference type="BioGRID" id="222698">
    <property type="interactions" value="2"/>
</dbReference>
<dbReference type="FunCoup" id="Q8BG07">
    <property type="interactions" value="332"/>
</dbReference>
<dbReference type="STRING" id="10090.ENSMUSP00000067002"/>
<dbReference type="GlyConnect" id="2584">
    <property type="glycosylation" value="4 N-Linked glycans (3 sites)"/>
</dbReference>
<dbReference type="GlyCosmos" id="Q8BG07">
    <property type="glycosylation" value="8 sites, 4 glycans"/>
</dbReference>
<dbReference type="GlyGen" id="Q8BG07">
    <property type="glycosylation" value="8 sites, 6 N-linked glycans (5 sites)"/>
</dbReference>
<dbReference type="iPTMnet" id="Q8BG07"/>
<dbReference type="PhosphoSitePlus" id="Q8BG07"/>
<dbReference type="jPOST" id="Q8BG07"/>
<dbReference type="PaxDb" id="10090-ENSMUSP00000067002"/>
<dbReference type="PeptideAtlas" id="Q8BG07"/>
<dbReference type="ProteomicsDB" id="289757">
    <molecule id="Q8BG07-1"/>
</dbReference>
<dbReference type="ProteomicsDB" id="289758">
    <molecule id="Q8BG07-2"/>
</dbReference>
<dbReference type="Antibodypedia" id="28277">
    <property type="antibodies" value="179 antibodies from 26 providers"/>
</dbReference>
<dbReference type="Ensembl" id="ENSMUST00000063888.5">
    <molecule id="Q8BG07-1"/>
    <property type="protein sequence ID" value="ENSMUSP00000067002.4"/>
    <property type="gene ID" value="ENSMUSG00000052160.8"/>
</dbReference>
<dbReference type="GeneID" id="104759"/>
<dbReference type="KEGG" id="mmu:104759"/>
<dbReference type="UCSC" id="uc007pfc.1">
    <molecule id="Q8BG07-1"/>
    <property type="organism name" value="mouse"/>
</dbReference>
<dbReference type="UCSC" id="uc007pfd.1">
    <molecule id="Q8BG07-2"/>
    <property type="organism name" value="mouse"/>
</dbReference>
<dbReference type="AGR" id="MGI:2144765"/>
<dbReference type="CTD" id="122618"/>
<dbReference type="MGI" id="MGI:2144765">
    <property type="gene designation" value="Pld4"/>
</dbReference>
<dbReference type="VEuPathDB" id="HostDB:ENSMUSG00000052160"/>
<dbReference type="eggNOG" id="KOG3603">
    <property type="taxonomic scope" value="Eukaryota"/>
</dbReference>
<dbReference type="GeneTree" id="ENSGT00950000183059"/>
<dbReference type="HOGENOM" id="CLU_027021_0_0_1"/>
<dbReference type="InParanoid" id="Q8BG07"/>
<dbReference type="OMA" id="GYIIPVF"/>
<dbReference type="OrthoDB" id="1923775at2759"/>
<dbReference type="PhylomeDB" id="Q8BG07"/>
<dbReference type="TreeFam" id="TF313378"/>
<dbReference type="Reactome" id="R-MMU-1855204">
    <property type="pathway name" value="Synthesis of IP3 and IP4 in the cytosol"/>
</dbReference>
<dbReference type="Reactome" id="R-MMU-2029485">
    <property type="pathway name" value="Role of phospholipids in phagocytosis"/>
</dbReference>
<dbReference type="BioGRID-ORCS" id="104759">
    <property type="hits" value="5 hits in 81 CRISPR screens"/>
</dbReference>
<dbReference type="ChiTaRS" id="Pld4">
    <property type="organism name" value="mouse"/>
</dbReference>
<dbReference type="PRO" id="PR:Q8BG07"/>
<dbReference type="Proteomes" id="UP000000589">
    <property type="component" value="Chromosome 12"/>
</dbReference>
<dbReference type="RNAct" id="Q8BG07">
    <property type="molecule type" value="protein"/>
</dbReference>
<dbReference type="Bgee" id="ENSMUSG00000052160">
    <property type="expression patterns" value="Expressed in spleen and 68 other cell types or tissues"/>
</dbReference>
<dbReference type="GO" id="GO:0005769">
    <property type="term" value="C:early endosome"/>
    <property type="evidence" value="ECO:0000314"/>
    <property type="project" value="UniProtKB"/>
</dbReference>
<dbReference type="GO" id="GO:0005783">
    <property type="term" value="C:endoplasmic reticulum"/>
    <property type="evidence" value="ECO:0000314"/>
    <property type="project" value="MGI"/>
</dbReference>
<dbReference type="GO" id="GO:0005789">
    <property type="term" value="C:endoplasmic reticulum membrane"/>
    <property type="evidence" value="ECO:0000314"/>
    <property type="project" value="UniProtKB"/>
</dbReference>
<dbReference type="GO" id="GO:0005764">
    <property type="term" value="C:lysosome"/>
    <property type="evidence" value="ECO:0007669"/>
    <property type="project" value="UniProtKB-SubCell"/>
</dbReference>
<dbReference type="GO" id="GO:0005634">
    <property type="term" value="C:nucleus"/>
    <property type="evidence" value="ECO:0000314"/>
    <property type="project" value="UniProtKB"/>
</dbReference>
<dbReference type="GO" id="GO:0045335">
    <property type="term" value="C:phagocytic vesicle"/>
    <property type="evidence" value="ECO:0000314"/>
    <property type="project" value="UniProtKB"/>
</dbReference>
<dbReference type="GO" id="GO:0032588">
    <property type="term" value="C:trans-Golgi network membrane"/>
    <property type="evidence" value="ECO:0000314"/>
    <property type="project" value="UniProtKB"/>
</dbReference>
<dbReference type="GO" id="GO:0004630">
    <property type="term" value="F:phospholipase D activity"/>
    <property type="evidence" value="ECO:0000304"/>
    <property type="project" value="Reactome"/>
</dbReference>
<dbReference type="GO" id="GO:0045145">
    <property type="term" value="F:single-stranded DNA 5'-3' DNA exonuclease activity"/>
    <property type="evidence" value="ECO:0000315"/>
    <property type="project" value="UniProtKB"/>
</dbReference>
<dbReference type="GO" id="GO:0051649">
    <property type="term" value="P:establishment of localization in cell"/>
    <property type="evidence" value="ECO:0000315"/>
    <property type="project" value="MGI"/>
</dbReference>
<dbReference type="GO" id="GO:0002244">
    <property type="term" value="P:hematopoietic progenitor cell differentiation"/>
    <property type="evidence" value="ECO:0000315"/>
    <property type="project" value="MGI"/>
</dbReference>
<dbReference type="GO" id="GO:0006954">
    <property type="term" value="P:inflammatory response"/>
    <property type="evidence" value="ECO:0007669"/>
    <property type="project" value="UniProtKB-KW"/>
</dbReference>
<dbReference type="GO" id="GO:0045087">
    <property type="term" value="P:innate immune response"/>
    <property type="evidence" value="ECO:0007669"/>
    <property type="project" value="UniProtKB-KW"/>
</dbReference>
<dbReference type="GO" id="GO:0006629">
    <property type="term" value="P:lipid metabolic process"/>
    <property type="evidence" value="ECO:0007669"/>
    <property type="project" value="UniProtKB-KW"/>
</dbReference>
<dbReference type="GO" id="GO:0006909">
    <property type="term" value="P:phagocytosis"/>
    <property type="evidence" value="ECO:0000315"/>
    <property type="project" value="MGI"/>
</dbReference>
<dbReference type="GO" id="GO:1900015">
    <property type="term" value="P:regulation of cytokine production involved in inflammatory response"/>
    <property type="evidence" value="ECO:0000315"/>
    <property type="project" value="UniProtKB"/>
</dbReference>
<dbReference type="FunFam" id="3.30.870.10:FF:000013">
    <property type="entry name" value="phospholipase D3 isoform X1"/>
    <property type="match status" value="1"/>
</dbReference>
<dbReference type="FunFam" id="3.30.870.10:FF:000019">
    <property type="entry name" value="phospholipase D3 isoform X1"/>
    <property type="match status" value="1"/>
</dbReference>
<dbReference type="Gene3D" id="3.30.870.10">
    <property type="entry name" value="Endonuclease Chain A"/>
    <property type="match status" value="2"/>
</dbReference>
<dbReference type="InterPro" id="IPR050874">
    <property type="entry name" value="Diverse_PLD-related"/>
</dbReference>
<dbReference type="InterPro" id="IPR032803">
    <property type="entry name" value="PLDc_3"/>
</dbReference>
<dbReference type="InterPro" id="IPR001736">
    <property type="entry name" value="PLipase_D/transphosphatidylase"/>
</dbReference>
<dbReference type="PANTHER" id="PTHR10185:SF8">
    <property type="entry name" value="5'-3' EXONUCLEASE PLD4"/>
    <property type="match status" value="1"/>
</dbReference>
<dbReference type="PANTHER" id="PTHR10185">
    <property type="entry name" value="PHOSPHOLIPASE D - RELATED"/>
    <property type="match status" value="1"/>
</dbReference>
<dbReference type="Pfam" id="PF00614">
    <property type="entry name" value="PLDc"/>
    <property type="match status" value="1"/>
</dbReference>
<dbReference type="Pfam" id="PF13918">
    <property type="entry name" value="PLDc_3"/>
    <property type="match status" value="1"/>
</dbReference>
<dbReference type="SMART" id="SM00155">
    <property type="entry name" value="PLDc"/>
    <property type="match status" value="2"/>
</dbReference>
<dbReference type="SUPFAM" id="SSF56024">
    <property type="entry name" value="Phospholipase D/nuclease"/>
    <property type="match status" value="2"/>
</dbReference>
<dbReference type="PROSITE" id="PS50035">
    <property type="entry name" value="PLD"/>
    <property type="match status" value="2"/>
</dbReference>
<gene>
    <name evidence="12 20" type="primary">Pld4</name>
</gene>
<accession>Q8BG07</accession>
<accession>Q3TD59</accession>
<accession>Q3UA19</accession>
<accession>Q6PDR0</accession>
<accession>Q8BR69</accession>
<reference key="1">
    <citation type="journal article" date="2005" name="Science">
        <title>The transcriptional landscape of the mammalian genome.</title>
        <authorList>
            <person name="Carninci P."/>
            <person name="Kasukawa T."/>
            <person name="Katayama S."/>
            <person name="Gough J."/>
            <person name="Frith M.C."/>
            <person name="Maeda N."/>
            <person name="Oyama R."/>
            <person name="Ravasi T."/>
            <person name="Lenhard B."/>
            <person name="Wells C."/>
            <person name="Kodzius R."/>
            <person name="Shimokawa K."/>
            <person name="Bajic V.B."/>
            <person name="Brenner S.E."/>
            <person name="Batalov S."/>
            <person name="Forrest A.R."/>
            <person name="Zavolan M."/>
            <person name="Davis M.J."/>
            <person name="Wilming L.G."/>
            <person name="Aidinis V."/>
            <person name="Allen J.E."/>
            <person name="Ambesi-Impiombato A."/>
            <person name="Apweiler R."/>
            <person name="Aturaliya R.N."/>
            <person name="Bailey T.L."/>
            <person name="Bansal M."/>
            <person name="Baxter L."/>
            <person name="Beisel K.W."/>
            <person name="Bersano T."/>
            <person name="Bono H."/>
            <person name="Chalk A.M."/>
            <person name="Chiu K.P."/>
            <person name="Choudhary V."/>
            <person name="Christoffels A."/>
            <person name="Clutterbuck D.R."/>
            <person name="Crowe M.L."/>
            <person name="Dalla E."/>
            <person name="Dalrymple B.P."/>
            <person name="de Bono B."/>
            <person name="Della Gatta G."/>
            <person name="di Bernardo D."/>
            <person name="Down T."/>
            <person name="Engstrom P."/>
            <person name="Fagiolini M."/>
            <person name="Faulkner G."/>
            <person name="Fletcher C.F."/>
            <person name="Fukushima T."/>
            <person name="Furuno M."/>
            <person name="Futaki S."/>
            <person name="Gariboldi M."/>
            <person name="Georgii-Hemming P."/>
            <person name="Gingeras T.R."/>
            <person name="Gojobori T."/>
            <person name="Green R.E."/>
            <person name="Gustincich S."/>
            <person name="Harbers M."/>
            <person name="Hayashi Y."/>
            <person name="Hensch T.K."/>
            <person name="Hirokawa N."/>
            <person name="Hill D."/>
            <person name="Huminiecki L."/>
            <person name="Iacono M."/>
            <person name="Ikeo K."/>
            <person name="Iwama A."/>
            <person name="Ishikawa T."/>
            <person name="Jakt M."/>
            <person name="Kanapin A."/>
            <person name="Katoh M."/>
            <person name="Kawasawa Y."/>
            <person name="Kelso J."/>
            <person name="Kitamura H."/>
            <person name="Kitano H."/>
            <person name="Kollias G."/>
            <person name="Krishnan S.P."/>
            <person name="Kruger A."/>
            <person name="Kummerfeld S.K."/>
            <person name="Kurochkin I.V."/>
            <person name="Lareau L.F."/>
            <person name="Lazarevic D."/>
            <person name="Lipovich L."/>
            <person name="Liu J."/>
            <person name="Liuni S."/>
            <person name="McWilliam S."/>
            <person name="Madan Babu M."/>
            <person name="Madera M."/>
            <person name="Marchionni L."/>
            <person name="Matsuda H."/>
            <person name="Matsuzawa S."/>
            <person name="Miki H."/>
            <person name="Mignone F."/>
            <person name="Miyake S."/>
            <person name="Morris K."/>
            <person name="Mottagui-Tabar S."/>
            <person name="Mulder N."/>
            <person name="Nakano N."/>
            <person name="Nakauchi H."/>
            <person name="Ng P."/>
            <person name="Nilsson R."/>
            <person name="Nishiguchi S."/>
            <person name="Nishikawa S."/>
            <person name="Nori F."/>
            <person name="Ohara O."/>
            <person name="Okazaki Y."/>
            <person name="Orlando V."/>
            <person name="Pang K.C."/>
            <person name="Pavan W.J."/>
            <person name="Pavesi G."/>
            <person name="Pesole G."/>
            <person name="Petrovsky N."/>
            <person name="Piazza S."/>
            <person name="Reed J."/>
            <person name="Reid J.F."/>
            <person name="Ring B.Z."/>
            <person name="Ringwald M."/>
            <person name="Rost B."/>
            <person name="Ruan Y."/>
            <person name="Salzberg S.L."/>
            <person name="Sandelin A."/>
            <person name="Schneider C."/>
            <person name="Schoenbach C."/>
            <person name="Sekiguchi K."/>
            <person name="Semple C.A."/>
            <person name="Seno S."/>
            <person name="Sessa L."/>
            <person name="Sheng Y."/>
            <person name="Shibata Y."/>
            <person name="Shimada H."/>
            <person name="Shimada K."/>
            <person name="Silva D."/>
            <person name="Sinclair B."/>
            <person name="Sperling S."/>
            <person name="Stupka E."/>
            <person name="Sugiura K."/>
            <person name="Sultana R."/>
            <person name="Takenaka Y."/>
            <person name="Taki K."/>
            <person name="Tammoja K."/>
            <person name="Tan S.L."/>
            <person name="Tang S."/>
            <person name="Taylor M.S."/>
            <person name="Tegner J."/>
            <person name="Teichmann S.A."/>
            <person name="Ueda H.R."/>
            <person name="van Nimwegen E."/>
            <person name="Verardo R."/>
            <person name="Wei C.L."/>
            <person name="Yagi K."/>
            <person name="Yamanishi H."/>
            <person name="Zabarovsky E."/>
            <person name="Zhu S."/>
            <person name="Zimmer A."/>
            <person name="Hide W."/>
            <person name="Bult C."/>
            <person name="Grimmond S.M."/>
            <person name="Teasdale R.D."/>
            <person name="Liu E.T."/>
            <person name="Brusic V."/>
            <person name="Quackenbush J."/>
            <person name="Wahlestedt C."/>
            <person name="Mattick J.S."/>
            <person name="Hume D.A."/>
            <person name="Kai C."/>
            <person name="Sasaki D."/>
            <person name="Tomaru Y."/>
            <person name="Fukuda S."/>
            <person name="Kanamori-Katayama M."/>
            <person name="Suzuki M."/>
            <person name="Aoki J."/>
            <person name="Arakawa T."/>
            <person name="Iida J."/>
            <person name="Imamura K."/>
            <person name="Itoh M."/>
            <person name="Kato T."/>
            <person name="Kawaji H."/>
            <person name="Kawagashira N."/>
            <person name="Kawashima T."/>
            <person name="Kojima M."/>
            <person name="Kondo S."/>
            <person name="Konno H."/>
            <person name="Nakano K."/>
            <person name="Ninomiya N."/>
            <person name="Nishio T."/>
            <person name="Okada M."/>
            <person name="Plessy C."/>
            <person name="Shibata K."/>
            <person name="Shiraki T."/>
            <person name="Suzuki S."/>
            <person name="Tagami M."/>
            <person name="Waki K."/>
            <person name="Watahiki A."/>
            <person name="Okamura-Oho Y."/>
            <person name="Suzuki H."/>
            <person name="Kawai J."/>
            <person name="Hayashizaki Y."/>
        </authorList>
    </citation>
    <scope>NUCLEOTIDE SEQUENCE [LARGE SCALE MRNA] (ISOFORMS 1 AND 2)</scope>
    <source>
        <strain>C57BL/6J</strain>
        <strain>NOD</strain>
        <tissue>Bone marrow</tissue>
        <tissue>Corpora quadrigemina</tissue>
        <tissue>Hypothalamus</tissue>
        <tissue>Thymus</tissue>
    </source>
</reference>
<reference key="2">
    <citation type="journal article" date="2004" name="Genome Res.">
        <title>The status, quality, and expansion of the NIH full-length cDNA project: the Mammalian Gene Collection (MGC).</title>
        <authorList>
            <consortium name="The MGC Project Team"/>
        </authorList>
    </citation>
    <scope>NUCLEOTIDE SEQUENCE [LARGE SCALE MRNA] (ISOFORM 1)</scope>
    <source>
        <strain>FVB/N-3</strain>
        <tissue>Mammary tumor</tissue>
    </source>
</reference>
<reference key="3">
    <citation type="journal article" date="2010" name="Cell">
        <title>A tissue-specific atlas of mouse protein phosphorylation and expression.</title>
        <authorList>
            <person name="Huttlin E.L."/>
            <person name="Jedrychowski M.P."/>
            <person name="Elias J.E."/>
            <person name="Goswami T."/>
            <person name="Rad R."/>
            <person name="Beausoleil S.A."/>
            <person name="Villen J."/>
            <person name="Haas W."/>
            <person name="Sowa M.E."/>
            <person name="Gygi S.P."/>
        </authorList>
    </citation>
    <scope>IDENTIFICATION BY MASS SPECTROMETRY [LARGE SCALE ANALYSIS]</scope>
    <source>
        <tissue>Lung</tissue>
        <tissue>Spleen</tissue>
    </source>
</reference>
<reference key="4">
    <citation type="journal article" date="2010" name="PLoS ONE">
        <title>Phospholipase D family member 4, a transmembrane glycoprotein with no phospholipase D activity, expression in spleen and early postnatal microglia.</title>
        <authorList>
            <person name="Yoshikawa F."/>
            <person name="Banno Y."/>
            <person name="Otani Y."/>
            <person name="Yamaguchi Y."/>
            <person name="Nagakura-Takagi Y."/>
            <person name="Morita N."/>
            <person name="Sato Y."/>
            <person name="Saruta C."/>
            <person name="Nishibe H."/>
            <person name="Sadakata T."/>
            <person name="Shinoda Y."/>
            <person name="Hayashi K."/>
            <person name="Mishima Y."/>
            <person name="Baba H."/>
            <person name="Furuichi T."/>
        </authorList>
    </citation>
    <scope>DEVELOPMENTAL STAGE</scope>
    <scope>SUBCELLULAR LOCATION</scope>
    <scope>GLYCOSYLATION</scope>
    <scope>LACK OF PHOSPHOLIPASE ACTIVITY</scope>
    <scope>TISSUE SPECIFICITY</scope>
</reference>
<reference key="5">
    <citation type="journal article" date="2011" name="PLoS ONE">
        <title>PLD4 is involved in phagocytosis of microglia: expression and localization changes of PLD4 are correlated with activation state of microglia.</title>
        <authorList>
            <person name="Otani Y."/>
            <person name="Yamaguchi Y."/>
            <person name="Sato Y."/>
            <person name="Furuichi T."/>
            <person name="Ikenaka K."/>
            <person name="Kitani H."/>
            <person name="Baba H."/>
        </authorList>
    </citation>
    <scope>SUBCELLULAR LOCATION</scope>
    <scope>INDUCTION</scope>
    <scope>FUNCTION</scope>
    <scope>GLYCOSYLATION</scope>
</reference>
<reference key="6">
    <citation type="journal article" date="2018" name="Nat. Immunol.">
        <title>PLD3 and PLD4 are single-stranded acid exonucleases that regulate endosomal nucleic-acid sensing.</title>
        <authorList>
            <person name="Gavin A.L."/>
            <person name="Huang D."/>
            <person name="Huber C."/>
            <person name="Maartensson A."/>
            <person name="Tardif V."/>
            <person name="Skog P.D."/>
            <person name="Blane T.R."/>
            <person name="Thinnes T.C."/>
            <person name="Osborn K."/>
            <person name="Chong H.S."/>
            <person name="Kargaran F."/>
            <person name="Kimm P."/>
            <person name="Zeitjian A."/>
            <person name="Sielski R.L."/>
            <person name="Briggs M."/>
            <person name="Schulz S.R."/>
            <person name="Zarpellon A."/>
            <person name="Cravatt B."/>
            <person name="Pang E.S."/>
            <person name="Teijaro J."/>
            <person name="de la Torre J.C."/>
            <person name="O'Keeffe M."/>
            <person name="Hochrein H."/>
            <person name="Damme M."/>
            <person name="Teyton L."/>
            <person name="Lawson B.R."/>
            <person name="Nemazee D."/>
        </authorList>
    </citation>
    <scope>DISRUPTION PHENOTYPE</scope>
    <scope>FUNCTION</scope>
    <scope>CATALYTIC ACTIVITY</scope>
</reference>
<reference key="7">
    <citation type="journal article" date="2021" name="Nat. Commun.">
        <title>Cleavage of DNA and RNA by PLD3 and PLD4 limits autoinflammatory triggering by multiple sensors.</title>
        <authorList>
            <person name="Gavin A.L."/>
            <person name="Huang D."/>
            <person name="Blane T.R."/>
            <person name="Thinnes T.C."/>
            <person name="Murakami Y."/>
            <person name="Fukui R."/>
            <person name="Miyake K."/>
            <person name="Nemazee D."/>
        </authorList>
    </citation>
    <scope>FUNCTION</scope>
    <scope>CATALYTIC ACTIVITY</scope>
    <scope>BIOPHYSICOCHEMICAL PROPERTIES</scope>
    <scope>DISRUPTION PHENOTYPE</scope>
</reference>
<reference key="8">
    <citation type="journal article" date="2024" name="Cell">
        <title>PLD3 and PLD4 synthesize S,S-BMP, a key phospholipid enabling lipid degradation in lysosomes.</title>
        <authorList>
            <person name="Singh S."/>
            <person name="Dransfeld U.E."/>
            <person name="Ambaw Y.A."/>
            <person name="Lopez-Scarim J."/>
            <person name="Farese R.V. Jr."/>
            <person name="Walther T.C."/>
        </authorList>
    </citation>
    <scope>FUNCTION</scope>
</reference>
<reference key="9">
    <citation type="journal article" date="2024" name="Structure">
        <title>Structural and mechanistic insights into disease-associated endolysosomal exonucleases PLD3 and PLD4.</title>
        <authorList>
            <person name="Yuan M."/>
            <person name="Peng L."/>
            <person name="Huang D."/>
            <person name="Gavin A."/>
            <person name="Luan F."/>
            <person name="Tran J."/>
            <person name="Feng Z."/>
            <person name="Zhu X."/>
            <person name="Matteson J."/>
            <person name="Wilson I.A."/>
            <person name="Nemazee D."/>
        </authorList>
    </citation>
    <scope>FUNCTION</scope>
    <scope>CATALYTIC ACTIVITY</scope>
    <scope>ACTIVITY REGULATION</scope>
</reference>
<name>PLD4_MOUSE</name>
<sequence length="503" mass="56154">MDKKKEHPEMRIPLQTAVEVSDWPCSTSHDPHSGLGMVLGMLAVLGLSSVTLILFLWQGATSFTSHRMFPEEVPSWSWETLKGDAEQQNNSCQLILVESIPEDLPFAAGSPTAQPLAQAWLQLLDTARESVHIASYYWSLTGLDIGVNDSSSRQGEALLQKFQQLLLRNISVVVATHSPTLAKTSTDLQVLAAHGAQIRQVPMKQLTGGVLHSKFWVVDGRHIYVGSANMDWRSLTQVKELGAIIYNCSNLAQDLEKTFQTYWVLGTPQAVLPKTWPRNFSSHINRFHPLRGPFDGVPTTAYFSASPPSLCPHGRTRDLDAVLGVMEGARQFIYVSVMEYFPTTRFTHHARYWPVLDNALRAAALNKGVHVRLLVSCWFNTDPTMFAYLRSLQAFSNPSAGISVDVKVFIVPVGNHSNIPFSRVNHSKFMVTDKTAYVGTSNWSEDYFSHTAGVGLIVSQKTPRAQPGATTVQEQLRQLFERDWSSHYAMDLDRQVPSQDCVW</sequence>
<proteinExistence type="evidence at protein level"/>
<protein>
    <recommendedName>
        <fullName evidence="16">5'-3' exonuclease PLD4</fullName>
        <ecNumber evidence="7">3.1.16.1</ecNumber>
    </recommendedName>
    <alternativeName>
        <fullName evidence="19">(S,S)-bis(monoacylglycero)phosphate synthase PLD4</fullName>
        <ecNumber evidence="10">3.1.4.-</ecNumber>
    </alternativeName>
    <alternativeName>
        <fullName>Phospholipase D family member 4</fullName>
    </alternativeName>
    <alternativeName>
        <fullName>Phospholipase D4</fullName>
    </alternativeName>
</protein>
<feature type="chain" id="PRO_0000280334" description="5'-3' exonuclease PLD4">
    <location>
        <begin position="1"/>
        <end position="503"/>
    </location>
</feature>
<feature type="topological domain" description="Cytoplasmic" evidence="14">
    <location>
        <begin position="1"/>
        <end position="36"/>
    </location>
</feature>
<feature type="transmembrane region" description="Signal-anchor for type II membrane protein" evidence="13">
    <location>
        <begin position="37"/>
        <end position="57"/>
    </location>
</feature>
<feature type="topological domain" description="Lumenal" evidence="14">
    <location>
        <begin position="58"/>
        <end position="503"/>
    </location>
</feature>
<feature type="domain" description="PLD phosphodiesterase 1" evidence="3">
    <location>
        <begin position="207"/>
        <end position="234"/>
    </location>
</feature>
<feature type="domain" description="PLD phosphodiesterase 2" evidence="3">
    <location>
        <begin position="421"/>
        <end position="447"/>
    </location>
</feature>
<feature type="active site" evidence="3">
    <location>
        <position position="212"/>
    </location>
</feature>
<feature type="active site" description="Proton donor" evidence="3">
    <location>
        <position position="212"/>
    </location>
</feature>
<feature type="active site" evidence="3">
    <location>
        <position position="214"/>
    </location>
</feature>
<feature type="active site" evidence="3">
    <location>
        <position position="219"/>
    </location>
</feature>
<feature type="active site" evidence="3">
    <location>
        <position position="426"/>
    </location>
</feature>
<feature type="active site" description="Nucleophile" evidence="2">
    <location>
        <position position="426"/>
    </location>
</feature>
<feature type="active site" evidence="3">
    <location>
        <position position="428"/>
    </location>
</feature>
<feature type="active site" evidence="3">
    <location>
        <position position="433"/>
    </location>
</feature>
<feature type="glycosylation site" description="N-linked (GlcNAc...) asparagine" evidence="4">
    <location>
        <position position="89"/>
    </location>
</feature>
<feature type="glycosylation site" description="N-linked (GlcNAc...) asparagine" evidence="4">
    <location>
        <position position="148"/>
    </location>
</feature>
<feature type="glycosylation site" description="N-linked (GlcNAc...) asparagine" evidence="4">
    <location>
        <position position="169"/>
    </location>
</feature>
<feature type="glycosylation site" description="N-linked (GlcNAc...) asparagine" evidence="4">
    <location>
        <position position="247"/>
    </location>
</feature>
<feature type="glycosylation site" description="N-linked (GlcNAc...) asparagine" evidence="4">
    <location>
        <position position="279"/>
    </location>
</feature>
<feature type="glycosylation site" description="N-linked (GlcNAc...) asparagine" evidence="4">
    <location>
        <position position="415"/>
    </location>
</feature>
<feature type="glycosylation site" description="N-linked (GlcNAc...) asparagine" evidence="4">
    <location>
        <position position="425"/>
    </location>
</feature>
<feature type="glycosylation site" description="N-linked (GlcNAc...) asparagine" evidence="4">
    <location>
        <position position="442"/>
    </location>
</feature>
<feature type="disulfide bond" evidence="2">
    <location>
        <begin position="92"/>
        <end position="248"/>
    </location>
</feature>
<feature type="disulfide bond" evidence="2">
    <location>
        <begin position="377"/>
        <end position="501"/>
    </location>
</feature>
<feature type="splice variant" id="VSP_023630" description="In isoform 2." evidence="11">
    <original>MDKKKEHPE</original>
    <variation>M</variation>
    <location>
        <begin position="1"/>
        <end position="9"/>
    </location>
</feature>
<feature type="sequence conflict" description="In Ref. 2; AAH58565." evidence="13" ref="2">
    <original>I</original>
    <variation>V</variation>
    <location>
        <position position="223"/>
    </location>
</feature>
<feature type="sequence conflict" description="In Ref. 1; BAE41745." evidence="13" ref="1">
    <original>F</original>
    <variation>L</variation>
    <location>
        <position position="294"/>
    </location>
</feature>
<feature type="sequence conflict" description="In Ref. 1; BAE41745." evidence="13" ref="1">
    <original>H</original>
    <variation>Y</variation>
    <location>
        <position position="450"/>
    </location>
</feature>
<feature type="sequence conflict" description="In Ref. 1; BAC32379." evidence="13" ref="1">
    <original>A</original>
    <variation>G</variation>
    <location>
        <position position="452"/>
    </location>
</feature>
<feature type="sequence conflict" description="In Ref. 1; BAC32379." evidence="13" ref="1">
    <original>G</original>
    <variation>V</variation>
    <location>
        <position position="455"/>
    </location>
</feature>
<feature type="sequence conflict" description="In Ref. 1; BAC32379." evidence="13" ref="1">
    <original>D</original>
    <variation>G</variation>
    <location>
        <position position="483"/>
    </location>
</feature>
<feature type="sequence conflict" description="In Ref. 1; BAC32379." evidence="13" ref="1">
    <original>A</original>
    <variation>G</variation>
    <location>
        <position position="489"/>
    </location>
</feature>